<sequence>MAVEISETLTFECETGNYHTFCPISCVAWLYQKIEDSFFLVVGTKTCGYFSQNSLGVMIFAEPRYAMAELEEGDIPAQLNDYGESKRLCIQIIKNRNPSVIIWIGTCTTEIIKMDLEGIAPKLEAEIGVPIVVARANGLDYAFTQGEDTVLAAVTHRCPERKSSVGGQNQPVQDEELQEFFSFLPPNDENVKKTVVGSQKNPPLVLFGSLPSAVAHQPSSELKRQSIQISGWIPTERYNNLPSLGDEVYVCGVNPFLSRTATSLMRRRKCQLIGAPFPIGPDGTRAWIEKICSVFGIEAQGLEKREKKVWDSLENYLDQVRGKSVFFMGDNPLEISLARFLIRCGMTVYEIGIPYMDKRYQAAELYFLQNTCRDMRIPMPRIVEKPDNYNQLQRMYELQPDLVFTGMAHANPLQARGINTRWSIEFTFAQIHGFTNAKEILKLIIRPLKDNNDFKNFDWTNLVRKDNNSLN</sequence>
<proteinExistence type="inferred from homology"/>
<gene>
    <name evidence="1" type="primary">chlN</name>
</gene>
<keyword id="KW-0004">4Fe-4S</keyword>
<keyword id="KW-0067">ATP-binding</keyword>
<keyword id="KW-0149">Chlorophyll biosynthesis</keyword>
<keyword id="KW-0150">Chloroplast</keyword>
<keyword id="KW-0408">Iron</keyword>
<keyword id="KW-0411">Iron-sulfur</keyword>
<keyword id="KW-0479">Metal-binding</keyword>
<keyword id="KW-0547">Nucleotide-binding</keyword>
<keyword id="KW-0560">Oxidoreductase</keyword>
<keyword id="KW-0602">Photosynthesis</keyword>
<keyword id="KW-0934">Plastid</keyword>
<name>CHLN_HUPLU</name>
<organism>
    <name type="scientific">Huperzia lucidula</name>
    <name type="common">Shining clubmoss</name>
    <name type="synonym">Lycopodium lucidulum</name>
    <dbReference type="NCBI Taxonomy" id="37429"/>
    <lineage>
        <taxon>Eukaryota</taxon>
        <taxon>Viridiplantae</taxon>
        <taxon>Streptophyta</taxon>
        <taxon>Embryophyta</taxon>
        <taxon>Tracheophyta</taxon>
        <taxon>Lycopodiopsida</taxon>
        <taxon>Lycopodiales</taxon>
        <taxon>Lycopodiaceae</taxon>
        <taxon>Huperzioideae</taxon>
        <taxon>Huperzia</taxon>
    </lineage>
</organism>
<accession>Q5SCY8</accession>
<feature type="chain" id="PRO_0000208613" description="Light-independent protochlorophyllide reductase subunit N">
    <location>
        <begin position="1"/>
        <end position="471"/>
    </location>
</feature>
<feature type="binding site" evidence="1">
    <location>
        <position position="22"/>
    </location>
    <ligand>
        <name>[4Fe-4S] cluster</name>
        <dbReference type="ChEBI" id="CHEBI:49883"/>
        <note>ligand shared with heterodimeric partner</note>
    </ligand>
</feature>
<feature type="binding site" evidence="1">
    <location>
        <position position="47"/>
    </location>
    <ligand>
        <name>[4Fe-4S] cluster</name>
        <dbReference type="ChEBI" id="CHEBI:49883"/>
        <note>ligand shared with heterodimeric partner</note>
    </ligand>
</feature>
<feature type="binding site" evidence="1">
    <location>
        <position position="107"/>
    </location>
    <ligand>
        <name>[4Fe-4S] cluster</name>
        <dbReference type="ChEBI" id="CHEBI:49883"/>
        <note>ligand shared with heterodimeric partner</note>
    </ligand>
</feature>
<protein>
    <recommendedName>
        <fullName evidence="1">Light-independent protochlorophyllide reductase subunit N</fullName>
        <shortName evidence="1">DPOR subunit N</shortName>
        <shortName evidence="1">LI-POR subunit N</shortName>
        <ecNumber evidence="1">1.3.7.7</ecNumber>
    </recommendedName>
</protein>
<dbReference type="EC" id="1.3.7.7" evidence="1"/>
<dbReference type="EMBL" id="AY660566">
    <property type="protein sequence ID" value="AAT80754.1"/>
    <property type="molecule type" value="Genomic_DNA"/>
</dbReference>
<dbReference type="RefSeq" id="YP_209558.1">
    <property type="nucleotide sequence ID" value="NC_006861.1"/>
</dbReference>
<dbReference type="SMR" id="Q5SCY8"/>
<dbReference type="GeneID" id="3283834"/>
<dbReference type="UniPathway" id="UPA00670"/>
<dbReference type="GO" id="GO:0009507">
    <property type="term" value="C:chloroplast"/>
    <property type="evidence" value="ECO:0007669"/>
    <property type="project" value="UniProtKB-SubCell"/>
</dbReference>
<dbReference type="GO" id="GO:0051539">
    <property type="term" value="F:4 iron, 4 sulfur cluster binding"/>
    <property type="evidence" value="ECO:0007669"/>
    <property type="project" value="UniProtKB-UniRule"/>
</dbReference>
<dbReference type="GO" id="GO:0005524">
    <property type="term" value="F:ATP binding"/>
    <property type="evidence" value="ECO:0007669"/>
    <property type="project" value="UniProtKB-UniRule"/>
</dbReference>
<dbReference type="GO" id="GO:0046872">
    <property type="term" value="F:metal ion binding"/>
    <property type="evidence" value="ECO:0007669"/>
    <property type="project" value="UniProtKB-KW"/>
</dbReference>
<dbReference type="GO" id="GO:0016730">
    <property type="term" value="F:oxidoreductase activity, acting on iron-sulfur proteins as donors"/>
    <property type="evidence" value="ECO:0007669"/>
    <property type="project" value="InterPro"/>
</dbReference>
<dbReference type="GO" id="GO:0016636">
    <property type="term" value="F:oxidoreductase activity, acting on the CH-CH group of donors, iron-sulfur protein as acceptor"/>
    <property type="evidence" value="ECO:0007669"/>
    <property type="project" value="UniProtKB-UniRule"/>
</dbReference>
<dbReference type="GO" id="GO:0036068">
    <property type="term" value="P:light-independent chlorophyll biosynthetic process"/>
    <property type="evidence" value="ECO:0007669"/>
    <property type="project" value="UniProtKB-UniRule"/>
</dbReference>
<dbReference type="GO" id="GO:0019685">
    <property type="term" value="P:photosynthesis, dark reaction"/>
    <property type="evidence" value="ECO:0007669"/>
    <property type="project" value="InterPro"/>
</dbReference>
<dbReference type="CDD" id="cd01979">
    <property type="entry name" value="Pchlide_reductase_N"/>
    <property type="match status" value="1"/>
</dbReference>
<dbReference type="Gene3D" id="3.40.50.1980">
    <property type="entry name" value="Nitrogenase molybdenum iron protein domain"/>
    <property type="match status" value="3"/>
</dbReference>
<dbReference type="HAMAP" id="MF_00352">
    <property type="entry name" value="ChlN_BchN"/>
    <property type="match status" value="1"/>
</dbReference>
<dbReference type="InterPro" id="IPR050293">
    <property type="entry name" value="LIPOR_BchN/ChlN"/>
</dbReference>
<dbReference type="InterPro" id="IPR000510">
    <property type="entry name" value="Nase/OxRdtase_comp1"/>
</dbReference>
<dbReference type="InterPro" id="IPR005970">
    <property type="entry name" value="Protochl_reductN"/>
</dbReference>
<dbReference type="NCBIfam" id="TIGR01279">
    <property type="entry name" value="DPOR_bchN"/>
    <property type="match status" value="1"/>
</dbReference>
<dbReference type="NCBIfam" id="NF002768">
    <property type="entry name" value="PRK02842.1"/>
    <property type="match status" value="1"/>
</dbReference>
<dbReference type="PANTHER" id="PTHR39429">
    <property type="entry name" value="LIGHT-INDEPENDENT PROTOCHLOROPHYLLIDE REDUCTASE SUBUNIT N"/>
    <property type="match status" value="1"/>
</dbReference>
<dbReference type="PANTHER" id="PTHR39429:SF3">
    <property type="entry name" value="LIGHT-INDEPENDENT PROTOCHLOROPHYLLIDE REDUCTASE SUBUNIT N"/>
    <property type="match status" value="1"/>
</dbReference>
<dbReference type="Pfam" id="PF00148">
    <property type="entry name" value="Oxidored_nitro"/>
    <property type="match status" value="1"/>
</dbReference>
<dbReference type="PIRSF" id="PIRSF000162">
    <property type="entry name" value="P_chlorophyll_rd"/>
    <property type="match status" value="1"/>
</dbReference>
<dbReference type="SUPFAM" id="SSF53807">
    <property type="entry name" value="Helical backbone' metal receptor"/>
    <property type="match status" value="1"/>
</dbReference>
<comment type="function">
    <text evidence="1">Component of the dark-operative protochlorophyllide reductase (DPOR) that uses Mg-ATP and reduced ferredoxin to reduce ring D of protochlorophyllide (Pchlide) to form chlorophyllide a (Chlide). This reaction is light-independent. The NB-protein (ChlN-ChlB) is the catalytic component of the complex.</text>
</comment>
<comment type="catalytic activity">
    <reaction evidence="1">
        <text>chlorophyllide a + oxidized 2[4Fe-4S]-[ferredoxin] + 2 ADP + 2 phosphate = protochlorophyllide a + reduced 2[4Fe-4S]-[ferredoxin] + 2 ATP + 2 H2O</text>
        <dbReference type="Rhea" id="RHEA:28202"/>
        <dbReference type="Rhea" id="RHEA-COMP:10002"/>
        <dbReference type="Rhea" id="RHEA-COMP:10004"/>
        <dbReference type="ChEBI" id="CHEBI:15377"/>
        <dbReference type="ChEBI" id="CHEBI:30616"/>
        <dbReference type="ChEBI" id="CHEBI:33722"/>
        <dbReference type="ChEBI" id="CHEBI:33723"/>
        <dbReference type="ChEBI" id="CHEBI:43474"/>
        <dbReference type="ChEBI" id="CHEBI:83348"/>
        <dbReference type="ChEBI" id="CHEBI:83350"/>
        <dbReference type="ChEBI" id="CHEBI:456216"/>
        <dbReference type="EC" id="1.3.7.7"/>
    </reaction>
</comment>
<comment type="cofactor">
    <cofactor evidence="1">
        <name>[4Fe-4S] cluster</name>
        <dbReference type="ChEBI" id="CHEBI:49883"/>
    </cofactor>
    <text evidence="1">Binds 1 [4Fe-4S] cluster per heterodimer. The cluster is bound at the heterodimer interface by residues from both subunits.</text>
</comment>
<comment type="pathway">
    <text evidence="1">Porphyrin-containing compound metabolism; chlorophyll biosynthesis (light-independent).</text>
</comment>
<comment type="subunit">
    <text evidence="1">Protochlorophyllide reductase is composed of three subunits; ChlL, ChlN and ChlB. Forms a heterotetramer of two ChlB and two ChlN subunits.</text>
</comment>
<comment type="subcellular location">
    <subcellularLocation>
        <location>Plastid</location>
        <location>Chloroplast</location>
    </subcellularLocation>
</comment>
<comment type="similarity">
    <text evidence="1">Belongs to the BchN/ChlN family.</text>
</comment>
<geneLocation type="chloroplast"/>
<evidence type="ECO:0000255" key="1">
    <source>
        <dbReference type="HAMAP-Rule" id="MF_00352"/>
    </source>
</evidence>
<reference key="1">
    <citation type="journal article" date="2005" name="Gene">
        <title>The first complete chloroplast genome sequence of a lycophyte, Huperzia lucidula (Lycopodiaceae).</title>
        <authorList>
            <person name="Wolf P.G."/>
            <person name="Karol K.G."/>
            <person name="Mandoli D.F."/>
            <person name="Kuehl J.V."/>
            <person name="Arumuganathan K."/>
            <person name="Ellis M.W."/>
            <person name="Mishler B.D."/>
            <person name="Kelch D.G."/>
            <person name="Olmstead R.G."/>
            <person name="Boore J.L."/>
        </authorList>
    </citation>
    <scope>NUCLEOTIDE SEQUENCE [LARGE SCALE GENOMIC DNA]</scope>
</reference>